<reference key="1">
    <citation type="journal article" date="2008" name="Genome Res.">
        <title>Comparative genome analysis of Salmonella enteritidis PT4 and Salmonella gallinarum 287/91 provides insights into evolutionary and host adaptation pathways.</title>
        <authorList>
            <person name="Thomson N.R."/>
            <person name="Clayton D.J."/>
            <person name="Windhorst D."/>
            <person name="Vernikos G."/>
            <person name="Davidson S."/>
            <person name="Churcher C."/>
            <person name="Quail M.A."/>
            <person name="Stevens M."/>
            <person name="Jones M.A."/>
            <person name="Watson M."/>
            <person name="Barron A."/>
            <person name="Layton A."/>
            <person name="Pickard D."/>
            <person name="Kingsley R.A."/>
            <person name="Bignell A."/>
            <person name="Clark L."/>
            <person name="Harris B."/>
            <person name="Ormond D."/>
            <person name="Abdellah Z."/>
            <person name="Brooks K."/>
            <person name="Cherevach I."/>
            <person name="Chillingworth T."/>
            <person name="Woodward J."/>
            <person name="Norberczak H."/>
            <person name="Lord A."/>
            <person name="Arrowsmith C."/>
            <person name="Jagels K."/>
            <person name="Moule S."/>
            <person name="Mungall K."/>
            <person name="Saunders M."/>
            <person name="Whitehead S."/>
            <person name="Chabalgoity J.A."/>
            <person name="Maskell D."/>
            <person name="Humphreys T."/>
            <person name="Roberts M."/>
            <person name="Barrow P.A."/>
            <person name="Dougan G."/>
            <person name="Parkhill J."/>
        </authorList>
    </citation>
    <scope>NUCLEOTIDE SEQUENCE [LARGE SCALE GENOMIC DNA]</scope>
    <source>
        <strain>287/91 / NCTC 13346</strain>
    </source>
</reference>
<evidence type="ECO:0000255" key="1">
    <source>
        <dbReference type="HAMAP-Rule" id="MF_00015"/>
    </source>
</evidence>
<protein>
    <recommendedName>
        <fullName evidence="1">LexA repressor</fullName>
        <ecNumber evidence="1">3.4.21.88</ecNumber>
    </recommendedName>
</protein>
<name>LEXA_SALG2</name>
<proteinExistence type="inferred from homology"/>
<organism>
    <name type="scientific">Salmonella gallinarum (strain 287/91 / NCTC 13346)</name>
    <dbReference type="NCBI Taxonomy" id="550538"/>
    <lineage>
        <taxon>Bacteria</taxon>
        <taxon>Pseudomonadati</taxon>
        <taxon>Pseudomonadota</taxon>
        <taxon>Gammaproteobacteria</taxon>
        <taxon>Enterobacterales</taxon>
        <taxon>Enterobacteriaceae</taxon>
        <taxon>Salmonella</taxon>
    </lineage>
</organism>
<gene>
    <name evidence="1" type="primary">lexA</name>
    <name type="ordered locus">SG4080</name>
</gene>
<keyword id="KW-0068">Autocatalytic cleavage</keyword>
<keyword id="KW-0227">DNA damage</keyword>
<keyword id="KW-0234">DNA repair</keyword>
<keyword id="KW-0235">DNA replication</keyword>
<keyword id="KW-0238">DNA-binding</keyword>
<keyword id="KW-0378">Hydrolase</keyword>
<keyword id="KW-0678">Repressor</keyword>
<keyword id="KW-0742">SOS response</keyword>
<keyword id="KW-0804">Transcription</keyword>
<keyword id="KW-0805">Transcription regulation</keyword>
<comment type="function">
    <text evidence="1">Represses a number of genes involved in the response to DNA damage (SOS response), including recA and lexA. Binds to the 16 bp palindromic sequence 5'-CTGTATATATATACAG-3'. In the presence of single-stranded DNA, RecA interacts with LexA causing an autocatalytic cleavage which disrupts the DNA-binding part of LexA, leading to derepression of the SOS regulon and eventually DNA repair.</text>
</comment>
<comment type="catalytic activity">
    <reaction evidence="1">
        <text>Hydrolysis of Ala-|-Gly bond in repressor LexA.</text>
        <dbReference type="EC" id="3.4.21.88"/>
    </reaction>
</comment>
<comment type="subunit">
    <text evidence="1">Homodimer.</text>
</comment>
<comment type="similarity">
    <text evidence="1">Belongs to the peptidase S24 family.</text>
</comment>
<accession>B5R7T6</accession>
<sequence>MKALTARQQEVFDLIRDHISQTGMPPTRAEIAQRLGFRSPNAAEEHLKALARKGVLEIVSGASRGIRLLQEEEDGLPLVGRVAAGEPLLAQQHIEGHYQVDPSLFKPSADFLLRVSGMSMKDIGIMDGDLLAVHKTQDVRNGQVVVARIDDEVTVKRLKKQGNKVELLPENSEFTPIVVDLREQSFTIEGLAVGVIRNGEWL</sequence>
<feature type="chain" id="PRO_1000089593" description="LexA repressor">
    <location>
        <begin position="1"/>
        <end position="202"/>
    </location>
</feature>
<feature type="DNA-binding region" description="H-T-H motif" evidence="1">
    <location>
        <begin position="28"/>
        <end position="48"/>
    </location>
</feature>
<feature type="active site" description="For autocatalytic cleavage activity" evidence="1">
    <location>
        <position position="119"/>
    </location>
</feature>
<feature type="active site" description="For autocatalytic cleavage activity" evidence="1">
    <location>
        <position position="156"/>
    </location>
</feature>
<feature type="site" description="Cleavage; by autolysis" evidence="1">
    <location>
        <begin position="84"/>
        <end position="85"/>
    </location>
</feature>
<dbReference type="EC" id="3.4.21.88" evidence="1"/>
<dbReference type="EMBL" id="AM933173">
    <property type="protein sequence ID" value="CAR39849.1"/>
    <property type="molecule type" value="Genomic_DNA"/>
</dbReference>
<dbReference type="RefSeq" id="WP_000646079.1">
    <property type="nucleotide sequence ID" value="NC_011274.1"/>
</dbReference>
<dbReference type="SMR" id="B5R7T6"/>
<dbReference type="MEROPS" id="S24.001"/>
<dbReference type="KEGG" id="seg:SG4080"/>
<dbReference type="HOGENOM" id="CLU_066192_45_3_6"/>
<dbReference type="Proteomes" id="UP000008321">
    <property type="component" value="Chromosome"/>
</dbReference>
<dbReference type="GO" id="GO:0003677">
    <property type="term" value="F:DNA binding"/>
    <property type="evidence" value="ECO:0007669"/>
    <property type="project" value="UniProtKB-UniRule"/>
</dbReference>
<dbReference type="GO" id="GO:0004252">
    <property type="term" value="F:serine-type endopeptidase activity"/>
    <property type="evidence" value="ECO:0007669"/>
    <property type="project" value="UniProtKB-UniRule"/>
</dbReference>
<dbReference type="GO" id="GO:0006281">
    <property type="term" value="P:DNA repair"/>
    <property type="evidence" value="ECO:0007669"/>
    <property type="project" value="UniProtKB-UniRule"/>
</dbReference>
<dbReference type="GO" id="GO:0006260">
    <property type="term" value="P:DNA replication"/>
    <property type="evidence" value="ECO:0007669"/>
    <property type="project" value="UniProtKB-UniRule"/>
</dbReference>
<dbReference type="GO" id="GO:0045892">
    <property type="term" value="P:negative regulation of DNA-templated transcription"/>
    <property type="evidence" value="ECO:0007669"/>
    <property type="project" value="UniProtKB-UniRule"/>
</dbReference>
<dbReference type="GO" id="GO:0006508">
    <property type="term" value="P:proteolysis"/>
    <property type="evidence" value="ECO:0007669"/>
    <property type="project" value="InterPro"/>
</dbReference>
<dbReference type="GO" id="GO:0009432">
    <property type="term" value="P:SOS response"/>
    <property type="evidence" value="ECO:0007669"/>
    <property type="project" value="UniProtKB-UniRule"/>
</dbReference>
<dbReference type="CDD" id="cd06529">
    <property type="entry name" value="S24_LexA-like"/>
    <property type="match status" value="1"/>
</dbReference>
<dbReference type="FunFam" id="1.10.10.10:FF:000009">
    <property type="entry name" value="LexA repressor"/>
    <property type="match status" value="1"/>
</dbReference>
<dbReference type="FunFam" id="2.10.109.10:FF:000001">
    <property type="entry name" value="LexA repressor"/>
    <property type="match status" value="1"/>
</dbReference>
<dbReference type="Gene3D" id="2.10.109.10">
    <property type="entry name" value="Umud Fragment, subunit A"/>
    <property type="match status" value="1"/>
</dbReference>
<dbReference type="Gene3D" id="1.10.10.10">
    <property type="entry name" value="Winged helix-like DNA-binding domain superfamily/Winged helix DNA-binding domain"/>
    <property type="match status" value="1"/>
</dbReference>
<dbReference type="HAMAP" id="MF_00015">
    <property type="entry name" value="LexA"/>
    <property type="match status" value="1"/>
</dbReference>
<dbReference type="InterPro" id="IPR006200">
    <property type="entry name" value="LexA"/>
</dbReference>
<dbReference type="InterPro" id="IPR039418">
    <property type="entry name" value="LexA-like"/>
</dbReference>
<dbReference type="InterPro" id="IPR036286">
    <property type="entry name" value="LexA/Signal_pep-like_sf"/>
</dbReference>
<dbReference type="InterPro" id="IPR006199">
    <property type="entry name" value="LexA_DNA-bd_dom"/>
</dbReference>
<dbReference type="InterPro" id="IPR050077">
    <property type="entry name" value="LexA_repressor"/>
</dbReference>
<dbReference type="InterPro" id="IPR006197">
    <property type="entry name" value="Peptidase_S24_LexA"/>
</dbReference>
<dbReference type="InterPro" id="IPR015927">
    <property type="entry name" value="Peptidase_S24_S26A/B/C"/>
</dbReference>
<dbReference type="InterPro" id="IPR036388">
    <property type="entry name" value="WH-like_DNA-bd_sf"/>
</dbReference>
<dbReference type="InterPro" id="IPR036390">
    <property type="entry name" value="WH_DNA-bd_sf"/>
</dbReference>
<dbReference type="NCBIfam" id="TIGR00498">
    <property type="entry name" value="lexA"/>
    <property type="match status" value="1"/>
</dbReference>
<dbReference type="PANTHER" id="PTHR33516">
    <property type="entry name" value="LEXA REPRESSOR"/>
    <property type="match status" value="1"/>
</dbReference>
<dbReference type="PANTHER" id="PTHR33516:SF2">
    <property type="entry name" value="LEXA REPRESSOR-RELATED"/>
    <property type="match status" value="1"/>
</dbReference>
<dbReference type="Pfam" id="PF01726">
    <property type="entry name" value="LexA_DNA_bind"/>
    <property type="match status" value="1"/>
</dbReference>
<dbReference type="Pfam" id="PF00717">
    <property type="entry name" value="Peptidase_S24"/>
    <property type="match status" value="1"/>
</dbReference>
<dbReference type="PRINTS" id="PR00726">
    <property type="entry name" value="LEXASERPTASE"/>
</dbReference>
<dbReference type="SUPFAM" id="SSF51306">
    <property type="entry name" value="LexA/Signal peptidase"/>
    <property type="match status" value="1"/>
</dbReference>
<dbReference type="SUPFAM" id="SSF46785">
    <property type="entry name" value="Winged helix' DNA-binding domain"/>
    <property type="match status" value="1"/>
</dbReference>